<name>C170L_HUMAN</name>
<keyword id="KW-1267">Proteomics identification</keyword>
<keyword id="KW-1185">Reference proteome</keyword>
<sequence>MPTSSSFKHRIKEQEDYIRDWTAHREEIARISQDLALIAREINDVAGEIDSVTSSGTAPSTTLVDRVFDESLNFQKIPPLVHSKTPEGNNGRSGDPRPQAAEPPDHLTITRRRTWSRDEVMGDNLLLSSVFQFSKKIRQSIDKTAGKIRILFKDKDRNWDDIESKLRAESEVPIVKTSSMEISSILQELKRVEKQLQAINAMIDPDGTLEALNNMGFPSAMLPSPPKQKSSPVNNHHSPGQTPTLGQPEARALHPAAVSAAAEFENAESEADFSIHFNRVNPDGEEEDVTVHK</sequence>
<proteinExistence type="uncertain"/>
<comment type="interaction">
    <interactant intactId="EBI-743488">
        <id>Q96L14</id>
    </interactant>
    <interactant intactId="EBI-745226">
        <id>Q13155</id>
        <label>AIMP2</label>
    </interactant>
    <organismsDiffer>false</organismsDiffer>
    <experiments>5</experiments>
</comment>
<comment type="interaction">
    <interactant intactId="EBI-743488">
        <id>Q96L14</id>
    </interactant>
    <interactant intactId="EBI-10295284">
        <id>Q99819</id>
        <label>ARHGDIG</label>
    </interactant>
    <organismsDiffer>false</organismsDiffer>
    <experiments>3</experiments>
</comment>
<comment type="interaction">
    <interactant intactId="EBI-743488">
        <id>Q96L14</id>
    </interactant>
    <interactant intactId="EBI-10185348">
        <id>Q96HB5-4</id>
        <label>CCDC120</label>
    </interactant>
    <organismsDiffer>false</organismsDiffer>
    <experiments>4</experiments>
</comment>
<comment type="interaction">
    <interactant intactId="EBI-743488">
        <id>Q96L14</id>
    </interactant>
    <interactant intactId="EBI-10247802">
        <id>Q8IYE0-2</id>
        <label>CCDC146</label>
    </interactant>
    <organismsDiffer>false</organismsDiffer>
    <experiments>3</experiments>
</comment>
<comment type="interaction">
    <interactant intactId="EBI-743488">
        <id>Q96L14</id>
    </interactant>
    <interactant intactId="EBI-745954">
        <id>Q9BU64</id>
        <label>CENPO</label>
    </interactant>
    <organismsDiffer>false</organismsDiffer>
    <experiments>5</experiments>
</comment>
<comment type="interaction">
    <interactant intactId="EBI-743488">
        <id>Q96L14</id>
    </interactant>
    <interactant intactId="EBI-743488">
        <id>Q96L14</id>
        <label>CEP170P1</label>
    </interactant>
    <organismsDiffer>false</organismsDiffer>
    <experiments>3</experiments>
</comment>
<comment type="interaction">
    <interactant intactId="EBI-743488">
        <id>Q96L14</id>
    </interactant>
    <interactant intactId="EBI-10203156">
        <id>Q8NHS4</id>
        <label>CLHC1</label>
    </interactant>
    <organismsDiffer>false</organismsDiffer>
    <experiments>3</experiments>
</comment>
<comment type="interaction">
    <interactant intactId="EBI-743488">
        <id>Q96L14</id>
    </interactant>
    <interactant intactId="EBI-2514791">
        <id>Q96CS2</id>
        <label>HAUS1</label>
    </interactant>
    <organismsDiffer>false</organismsDiffer>
    <experiments>3</experiments>
</comment>
<comment type="interaction">
    <interactant intactId="EBI-743488">
        <id>Q96L14</id>
    </interactant>
    <interactant intactId="EBI-2125614">
        <id>Q9BVG8</id>
        <label>KIFC3</label>
    </interactant>
    <organismsDiffer>false</organismsDiffer>
    <experiments>6</experiments>
</comment>
<comment type="interaction">
    <interactant intactId="EBI-743488">
        <id>Q96L14</id>
    </interactant>
    <interactant intactId="EBI-8639312">
        <id>P25800</id>
        <label>LMO1</label>
    </interactant>
    <organismsDiffer>false</organismsDiffer>
    <experiments>3</experiments>
</comment>
<comment type="interaction">
    <interactant intactId="EBI-743488">
        <id>Q96L14</id>
    </interactant>
    <interactant intactId="EBI-2798728">
        <id>P61968</id>
        <label>LMO4</label>
    </interactant>
    <organismsDiffer>false</organismsDiffer>
    <experiments>3</experiments>
</comment>
<comment type="interaction">
    <interactant intactId="EBI-743488">
        <id>Q96L14</id>
    </interactant>
    <interactant intactId="EBI-536879">
        <id>O43482</id>
        <label>OIP5</label>
    </interactant>
    <organismsDiffer>false</organismsDiffer>
    <experiments>5</experiments>
</comment>
<comment type="interaction">
    <interactant intactId="EBI-743488">
        <id>Q96L14</id>
    </interactant>
    <interactant intactId="EBI-455078">
        <id>Q969G3</id>
        <label>SMARCE1</label>
    </interactant>
    <organismsDiffer>false</organismsDiffer>
    <experiments>3</experiments>
</comment>
<comment type="interaction">
    <interactant intactId="EBI-743488">
        <id>Q96L14</id>
    </interactant>
    <interactant intactId="EBI-10172867">
        <id>A1L4H1</id>
        <label>SSC5D</label>
    </interactant>
    <organismsDiffer>false</organismsDiffer>
    <experiments>3</experiments>
</comment>
<comment type="interaction">
    <interactant intactId="EBI-743488">
        <id>Q96L14</id>
    </interactant>
    <interactant intactId="EBI-10176929">
        <id>E2PSM9</id>
    </interactant>
    <organismsDiffer>false</organismsDiffer>
    <experiments>3</experiments>
</comment>
<comment type="similarity">
    <text evidence="2">Belongs to the CEP170 family.</text>
</comment>
<comment type="caution">
    <text evidence="2">Could be the product of a pseudogene.</text>
</comment>
<gene>
    <name type="primary">CEP170P1</name>
    <name type="synonym">CEP170L</name>
    <name type="synonym">KIAA0470L</name>
</gene>
<feature type="chain" id="PRO_0000343425" description="Cep170-like protein">
    <location>
        <begin position="1"/>
        <end position="293"/>
    </location>
</feature>
<feature type="region of interest" description="Disordered" evidence="1">
    <location>
        <begin position="78"/>
        <end position="110"/>
    </location>
</feature>
<feature type="region of interest" description="Disordered" evidence="1">
    <location>
        <begin position="217"/>
        <end position="270"/>
    </location>
</feature>
<feature type="compositionally biased region" description="Polar residues" evidence="1">
    <location>
        <begin position="227"/>
        <end position="245"/>
    </location>
</feature>
<organism>
    <name type="scientific">Homo sapiens</name>
    <name type="common">Human</name>
    <dbReference type="NCBI Taxonomy" id="9606"/>
    <lineage>
        <taxon>Eukaryota</taxon>
        <taxon>Metazoa</taxon>
        <taxon>Chordata</taxon>
        <taxon>Craniata</taxon>
        <taxon>Vertebrata</taxon>
        <taxon>Euteleostomi</taxon>
        <taxon>Mammalia</taxon>
        <taxon>Eutheria</taxon>
        <taxon>Euarchontoglires</taxon>
        <taxon>Primates</taxon>
        <taxon>Haplorrhini</taxon>
        <taxon>Catarrhini</taxon>
        <taxon>Hominidae</taxon>
        <taxon>Homo</taxon>
    </lineage>
</organism>
<protein>
    <recommendedName>
        <fullName>Cep170-like protein</fullName>
    </recommendedName>
    <alternativeName>
        <fullName>CEP170 pseudogene 1</fullName>
    </alternativeName>
</protein>
<dbReference type="EMBL" id="AC092670">
    <property type="status" value="NOT_ANNOTATED_CDS"/>
    <property type="molecule type" value="Genomic_DNA"/>
</dbReference>
<dbReference type="EMBL" id="BC014590">
    <property type="status" value="NOT_ANNOTATED_CDS"/>
    <property type="molecule type" value="mRNA"/>
</dbReference>
<dbReference type="SMR" id="Q96L14"/>
<dbReference type="FunCoup" id="Q96L14">
    <property type="interactions" value="262"/>
</dbReference>
<dbReference type="IntAct" id="Q96L14">
    <property type="interactions" value="134"/>
</dbReference>
<dbReference type="BioMuta" id="HGNC:28364"/>
<dbReference type="DMDM" id="74751998"/>
<dbReference type="jPOST" id="Q96L14"/>
<dbReference type="MassIVE" id="Q96L14"/>
<dbReference type="ProteomicsDB" id="77138"/>
<dbReference type="Pumba" id="Q96L14"/>
<dbReference type="AGR" id="HGNC:28364"/>
<dbReference type="GeneCards" id="CEP170P1"/>
<dbReference type="HGNC" id="HGNC:28364">
    <property type="gene designation" value="CEP170P1"/>
</dbReference>
<dbReference type="neXtProt" id="NX_Q96L14"/>
<dbReference type="InParanoid" id="Q96L14"/>
<dbReference type="PAN-GO" id="Q96L14">
    <property type="GO annotations" value="1 GO annotation based on evolutionary models"/>
</dbReference>
<dbReference type="PhylomeDB" id="Q96L14"/>
<dbReference type="PathwayCommons" id="Q96L14"/>
<dbReference type="SignaLink" id="Q96L14"/>
<dbReference type="Pharos" id="Q96L14">
    <property type="development level" value="Tdark"/>
</dbReference>
<dbReference type="PRO" id="PR:Q96L14"/>
<dbReference type="Proteomes" id="UP000005640">
    <property type="component" value="Unplaced"/>
</dbReference>
<dbReference type="RNAct" id="Q96L14">
    <property type="molecule type" value="protein"/>
</dbReference>
<dbReference type="GO" id="GO:0042802">
    <property type="term" value="F:identical protein binding"/>
    <property type="evidence" value="ECO:0000353"/>
    <property type="project" value="IntAct"/>
</dbReference>
<dbReference type="InterPro" id="IPR051176">
    <property type="entry name" value="Cent_Immune-Sig_Mod"/>
</dbReference>
<dbReference type="InterPro" id="IPR029300">
    <property type="entry name" value="CEP170_C"/>
</dbReference>
<dbReference type="PANTHER" id="PTHR15715">
    <property type="entry name" value="CENTROSOMAL PROTEIN OF 170 KDA"/>
    <property type="match status" value="1"/>
</dbReference>
<dbReference type="PANTHER" id="PTHR15715:SF17">
    <property type="entry name" value="CENTROSOMAL PROTEIN OF 170 KDA"/>
    <property type="match status" value="1"/>
</dbReference>
<dbReference type="Pfam" id="PF15308">
    <property type="entry name" value="CEP170_C"/>
    <property type="match status" value="1"/>
</dbReference>
<evidence type="ECO:0000256" key="1">
    <source>
        <dbReference type="SAM" id="MobiDB-lite"/>
    </source>
</evidence>
<evidence type="ECO:0000305" key="2"/>
<reference key="1">
    <citation type="journal article" date="2005" name="Nature">
        <title>Generation and annotation of the DNA sequences of human chromosomes 2 and 4.</title>
        <authorList>
            <person name="Hillier L.W."/>
            <person name="Graves T.A."/>
            <person name="Fulton R.S."/>
            <person name="Fulton L.A."/>
            <person name="Pepin K.H."/>
            <person name="Minx P."/>
            <person name="Wagner-McPherson C."/>
            <person name="Layman D."/>
            <person name="Wylie K."/>
            <person name="Sekhon M."/>
            <person name="Becker M.C."/>
            <person name="Fewell G.A."/>
            <person name="Delehaunty K.D."/>
            <person name="Miner T.L."/>
            <person name="Nash W.E."/>
            <person name="Kremitzki C."/>
            <person name="Oddy L."/>
            <person name="Du H."/>
            <person name="Sun H."/>
            <person name="Bradshaw-Cordum H."/>
            <person name="Ali J."/>
            <person name="Carter J."/>
            <person name="Cordes M."/>
            <person name="Harris A."/>
            <person name="Isak A."/>
            <person name="van Brunt A."/>
            <person name="Nguyen C."/>
            <person name="Du F."/>
            <person name="Courtney L."/>
            <person name="Kalicki J."/>
            <person name="Ozersky P."/>
            <person name="Abbott S."/>
            <person name="Armstrong J."/>
            <person name="Belter E.A."/>
            <person name="Caruso L."/>
            <person name="Cedroni M."/>
            <person name="Cotton M."/>
            <person name="Davidson T."/>
            <person name="Desai A."/>
            <person name="Elliott G."/>
            <person name="Erb T."/>
            <person name="Fronick C."/>
            <person name="Gaige T."/>
            <person name="Haakenson W."/>
            <person name="Haglund K."/>
            <person name="Holmes A."/>
            <person name="Harkins R."/>
            <person name="Kim K."/>
            <person name="Kruchowski S.S."/>
            <person name="Strong C.M."/>
            <person name="Grewal N."/>
            <person name="Goyea E."/>
            <person name="Hou S."/>
            <person name="Levy A."/>
            <person name="Martinka S."/>
            <person name="Mead K."/>
            <person name="McLellan M.D."/>
            <person name="Meyer R."/>
            <person name="Randall-Maher J."/>
            <person name="Tomlinson C."/>
            <person name="Dauphin-Kohlberg S."/>
            <person name="Kozlowicz-Reilly A."/>
            <person name="Shah N."/>
            <person name="Swearengen-Shahid S."/>
            <person name="Snider J."/>
            <person name="Strong J.T."/>
            <person name="Thompson J."/>
            <person name="Yoakum M."/>
            <person name="Leonard S."/>
            <person name="Pearman C."/>
            <person name="Trani L."/>
            <person name="Radionenko M."/>
            <person name="Waligorski J.E."/>
            <person name="Wang C."/>
            <person name="Rock S.M."/>
            <person name="Tin-Wollam A.-M."/>
            <person name="Maupin R."/>
            <person name="Latreille P."/>
            <person name="Wendl M.C."/>
            <person name="Yang S.-P."/>
            <person name="Pohl C."/>
            <person name="Wallis J.W."/>
            <person name="Spieth J."/>
            <person name="Bieri T.A."/>
            <person name="Berkowicz N."/>
            <person name="Nelson J.O."/>
            <person name="Osborne J."/>
            <person name="Ding L."/>
            <person name="Meyer R."/>
            <person name="Sabo A."/>
            <person name="Shotland Y."/>
            <person name="Sinha P."/>
            <person name="Wohldmann P.E."/>
            <person name="Cook L.L."/>
            <person name="Hickenbotham M.T."/>
            <person name="Eldred J."/>
            <person name="Williams D."/>
            <person name="Jones T.A."/>
            <person name="She X."/>
            <person name="Ciccarelli F.D."/>
            <person name="Izaurralde E."/>
            <person name="Taylor J."/>
            <person name="Schmutz J."/>
            <person name="Myers R.M."/>
            <person name="Cox D.R."/>
            <person name="Huang X."/>
            <person name="McPherson J.D."/>
            <person name="Mardis E.R."/>
            <person name="Clifton S.W."/>
            <person name="Warren W.C."/>
            <person name="Chinwalla A.T."/>
            <person name="Eddy S.R."/>
            <person name="Marra M.A."/>
            <person name="Ovcharenko I."/>
            <person name="Furey T.S."/>
            <person name="Miller W."/>
            <person name="Eichler E.E."/>
            <person name="Bork P."/>
            <person name="Suyama M."/>
            <person name="Torrents D."/>
            <person name="Waterston R.H."/>
            <person name="Wilson R.K."/>
        </authorList>
    </citation>
    <scope>NUCLEOTIDE SEQUENCE [LARGE SCALE GENOMIC DNA]</scope>
</reference>
<reference key="2">
    <citation type="journal article" date="2004" name="Genome Res.">
        <title>The status, quality, and expansion of the NIH full-length cDNA project: the Mammalian Gene Collection (MGC).</title>
        <authorList>
            <consortium name="The MGC Project Team"/>
        </authorList>
    </citation>
    <scope>NUCLEOTIDE SEQUENCE [LARGE SCALE MRNA]</scope>
    <source>
        <tissue>Testis</tissue>
    </source>
</reference>
<accession>Q96L14</accession>